<keyword id="KW-0378">Hydrolase</keyword>
<keyword id="KW-0460">Magnesium</keyword>
<keyword id="KW-0479">Metal-binding</keyword>
<keyword id="KW-1185">Reference proteome</keyword>
<evidence type="ECO:0000250" key="1"/>
<evidence type="ECO:0000305" key="2"/>
<gene>
    <name type="primary">yigL</name>
    <name type="ordered locus">Z5347</name>
    <name type="ordered locus">ECs4756</name>
</gene>
<sequence length="266" mass="29704">MYQVVASDLDGTLLSPDHTLSPYAKEPLKLLTARGINFVFATGRHHVDVGQIRDNLEIKSYMITSNGARVHDLDGNLIFAHNLDRDIASDLFGVVNDNPDIITNVYRDDEWFMNRHRPEEMRFFKEAVFKYALYEPGLLEPEGVSKVFFTCDSHEQLLPLEQAINARWGDRVNVSFSTLTCLEVMAGGVSKGHALEAVAKKLGYSLKDCIAFGDGMNDAEMLSMAGKGCIMGSAHQRLKDLHPELEVIGTNADDAVPHYLRKLYLS</sequence>
<comment type="function">
    <text evidence="1">Catalyzes the dephosphorylation of pyridoxal-phosphate (PLP) and sugar phosphate.</text>
</comment>
<comment type="catalytic activity">
    <reaction>
        <text>pyridoxal 5'-phosphate + H2O = pyridoxal + phosphate</text>
        <dbReference type="Rhea" id="RHEA:20533"/>
        <dbReference type="ChEBI" id="CHEBI:15377"/>
        <dbReference type="ChEBI" id="CHEBI:17310"/>
        <dbReference type="ChEBI" id="CHEBI:43474"/>
        <dbReference type="ChEBI" id="CHEBI:597326"/>
        <dbReference type="EC" id="3.1.3.74"/>
    </reaction>
</comment>
<comment type="catalytic activity">
    <reaction>
        <text>sugar phosphate + H2O = sugar + phosphate.</text>
        <dbReference type="EC" id="3.1.3.23"/>
    </reaction>
</comment>
<comment type="cofactor">
    <cofactor evidence="1">
        <name>Mg(2+)</name>
        <dbReference type="ChEBI" id="CHEBI:18420"/>
    </cofactor>
    <cofactor evidence="1">
        <name>Mn(2+)</name>
        <dbReference type="ChEBI" id="CHEBI:29035"/>
    </cofactor>
    <cofactor evidence="1">
        <name>Co(2+)</name>
        <dbReference type="ChEBI" id="CHEBI:48828"/>
    </cofactor>
    <cofactor evidence="1">
        <name>Zn(2+)</name>
        <dbReference type="ChEBI" id="CHEBI:29105"/>
    </cofactor>
    <text evidence="1">Magnesium. Can also use other divalent metal cations as manganese, cobalt or zinc.</text>
</comment>
<comment type="similarity">
    <text evidence="2">Belongs to the HAD-like hydrolase superfamily. Cof family.</text>
</comment>
<comment type="sequence caution" evidence="2">
    <conflict type="erroneous initiation">
        <sequence resource="EMBL-CDS" id="AAG59022"/>
    </conflict>
    <text>Extended N-terminus.</text>
</comment>
<feature type="chain" id="PRO_0000054427" description="Pyridoxal phosphate phosphatase YigL">
    <location>
        <begin position="1"/>
        <end position="266"/>
    </location>
</feature>
<feature type="active site" description="Nucleophile" evidence="1">
    <location>
        <position position="8"/>
    </location>
</feature>
<feature type="binding site" evidence="1">
    <location>
        <position position="8"/>
    </location>
    <ligand>
        <name>Mg(2+)</name>
        <dbReference type="ChEBI" id="CHEBI:18420"/>
    </ligand>
</feature>
<feature type="binding site" evidence="1">
    <location>
        <position position="9"/>
    </location>
    <ligand>
        <name>phosphate</name>
        <dbReference type="ChEBI" id="CHEBI:43474"/>
    </ligand>
</feature>
<feature type="binding site" evidence="1">
    <location>
        <position position="10"/>
    </location>
    <ligand>
        <name>Mg(2+)</name>
        <dbReference type="ChEBI" id="CHEBI:18420"/>
    </ligand>
</feature>
<feature type="binding site" evidence="1">
    <location>
        <begin position="42"/>
        <end position="43"/>
    </location>
    <ligand>
        <name>phosphate</name>
        <dbReference type="ChEBI" id="CHEBI:43474"/>
    </ligand>
</feature>
<feature type="binding site" evidence="1">
    <location>
        <position position="191"/>
    </location>
    <ligand>
        <name>phosphate</name>
        <dbReference type="ChEBI" id="CHEBI:43474"/>
    </ligand>
</feature>
<feature type="binding site" evidence="1">
    <location>
        <position position="214"/>
    </location>
    <ligand>
        <name>Mg(2+)</name>
        <dbReference type="ChEBI" id="CHEBI:18420"/>
    </ligand>
</feature>
<feature type="binding site" evidence="1">
    <location>
        <position position="217"/>
    </location>
    <ligand>
        <name>phosphate</name>
        <dbReference type="ChEBI" id="CHEBI:43474"/>
    </ligand>
</feature>
<accession>Q8X8L6</accession>
<organism>
    <name type="scientific">Escherichia coli O157:H7</name>
    <dbReference type="NCBI Taxonomy" id="83334"/>
    <lineage>
        <taxon>Bacteria</taxon>
        <taxon>Pseudomonadati</taxon>
        <taxon>Pseudomonadota</taxon>
        <taxon>Gammaproteobacteria</taxon>
        <taxon>Enterobacterales</taxon>
        <taxon>Enterobacteriaceae</taxon>
        <taxon>Escherichia</taxon>
    </lineage>
</organism>
<dbReference type="EC" id="3.1.3.74"/>
<dbReference type="EC" id="3.1.3.23"/>
<dbReference type="EMBL" id="AE005174">
    <property type="protein sequence ID" value="AAG59022.1"/>
    <property type="status" value="ALT_INIT"/>
    <property type="molecule type" value="Genomic_DNA"/>
</dbReference>
<dbReference type="EMBL" id="BA000007">
    <property type="protein sequence ID" value="BAB38179.1"/>
    <property type="molecule type" value="Genomic_DNA"/>
</dbReference>
<dbReference type="PIR" id="B86070">
    <property type="entry name" value="B86070"/>
</dbReference>
<dbReference type="PIR" id="D91223">
    <property type="entry name" value="D91223"/>
</dbReference>
<dbReference type="RefSeq" id="NP_312783.1">
    <property type="nucleotide sequence ID" value="NC_002695.1"/>
</dbReference>
<dbReference type="RefSeq" id="WP_000285328.1">
    <property type="nucleotide sequence ID" value="NZ_VOAI01000017.1"/>
</dbReference>
<dbReference type="SMR" id="Q8X8L6"/>
<dbReference type="STRING" id="155864.Z5347"/>
<dbReference type="GeneID" id="915148"/>
<dbReference type="KEGG" id="ece:Z5347"/>
<dbReference type="KEGG" id="ecs:ECs_4756"/>
<dbReference type="PATRIC" id="fig|386585.9.peg.4965"/>
<dbReference type="eggNOG" id="COG0561">
    <property type="taxonomic scope" value="Bacteria"/>
</dbReference>
<dbReference type="HOGENOM" id="CLU_044146_5_2_6"/>
<dbReference type="Proteomes" id="UP000000558">
    <property type="component" value="Chromosome"/>
</dbReference>
<dbReference type="Proteomes" id="UP000002519">
    <property type="component" value="Chromosome"/>
</dbReference>
<dbReference type="GO" id="GO:0000287">
    <property type="term" value="F:magnesium ion binding"/>
    <property type="evidence" value="ECO:0000250"/>
    <property type="project" value="UniProtKB"/>
</dbReference>
<dbReference type="GO" id="GO:0046872">
    <property type="term" value="F:metal ion binding"/>
    <property type="evidence" value="ECO:0000250"/>
    <property type="project" value="UniProtKB"/>
</dbReference>
<dbReference type="GO" id="GO:0033883">
    <property type="term" value="F:pyridoxal phosphatase activity"/>
    <property type="evidence" value="ECO:0000250"/>
    <property type="project" value="UniProtKB"/>
</dbReference>
<dbReference type="GO" id="GO:0050308">
    <property type="term" value="F:sugar-phosphatase activity"/>
    <property type="evidence" value="ECO:0000250"/>
    <property type="project" value="UniProtKB"/>
</dbReference>
<dbReference type="CDD" id="cd07516">
    <property type="entry name" value="HAD_Pase"/>
    <property type="match status" value="1"/>
</dbReference>
<dbReference type="FunFam" id="3.30.1240.10:FF:000006">
    <property type="entry name" value="HAD superfamily hydrolase"/>
    <property type="match status" value="1"/>
</dbReference>
<dbReference type="Gene3D" id="3.30.1240.10">
    <property type="match status" value="1"/>
</dbReference>
<dbReference type="Gene3D" id="3.40.50.1000">
    <property type="entry name" value="HAD superfamily/HAD-like"/>
    <property type="match status" value="1"/>
</dbReference>
<dbReference type="InterPro" id="IPR000150">
    <property type="entry name" value="Cof"/>
</dbReference>
<dbReference type="InterPro" id="IPR036412">
    <property type="entry name" value="HAD-like_sf"/>
</dbReference>
<dbReference type="InterPro" id="IPR006379">
    <property type="entry name" value="HAD-SF_hydro_IIB"/>
</dbReference>
<dbReference type="InterPro" id="IPR023214">
    <property type="entry name" value="HAD_sf"/>
</dbReference>
<dbReference type="NCBIfam" id="TIGR00099">
    <property type="entry name" value="Cof-subfamily"/>
    <property type="match status" value="1"/>
</dbReference>
<dbReference type="NCBIfam" id="TIGR01484">
    <property type="entry name" value="HAD-SF-IIB"/>
    <property type="match status" value="1"/>
</dbReference>
<dbReference type="NCBIfam" id="NF008213">
    <property type="entry name" value="PRK10976.1"/>
    <property type="match status" value="1"/>
</dbReference>
<dbReference type="PANTHER" id="PTHR47267">
    <property type="match status" value="1"/>
</dbReference>
<dbReference type="PANTHER" id="PTHR47267:SF4">
    <property type="entry name" value="PYRIDOXAL PHOSPHATE PHOSPHATASE YIGL"/>
    <property type="match status" value="1"/>
</dbReference>
<dbReference type="Pfam" id="PF08282">
    <property type="entry name" value="Hydrolase_3"/>
    <property type="match status" value="1"/>
</dbReference>
<dbReference type="SFLD" id="SFLDG01144">
    <property type="entry name" value="C2.B.4:_PGP_Like"/>
    <property type="match status" value="1"/>
</dbReference>
<dbReference type="SFLD" id="SFLDG01140">
    <property type="entry name" value="C2.B:_Phosphomannomutase_and_P"/>
    <property type="match status" value="1"/>
</dbReference>
<dbReference type="SUPFAM" id="SSF56784">
    <property type="entry name" value="HAD-like"/>
    <property type="match status" value="1"/>
</dbReference>
<dbReference type="PROSITE" id="PS01228">
    <property type="entry name" value="COF_1"/>
    <property type="match status" value="1"/>
</dbReference>
<dbReference type="PROSITE" id="PS01229">
    <property type="entry name" value="COF_2"/>
    <property type="match status" value="1"/>
</dbReference>
<name>YIGL_ECO57</name>
<reference key="1">
    <citation type="journal article" date="2001" name="Nature">
        <title>Genome sequence of enterohaemorrhagic Escherichia coli O157:H7.</title>
        <authorList>
            <person name="Perna N.T."/>
            <person name="Plunkett G. III"/>
            <person name="Burland V."/>
            <person name="Mau B."/>
            <person name="Glasner J.D."/>
            <person name="Rose D.J."/>
            <person name="Mayhew G.F."/>
            <person name="Evans P.S."/>
            <person name="Gregor J."/>
            <person name="Kirkpatrick H.A."/>
            <person name="Posfai G."/>
            <person name="Hackett J."/>
            <person name="Klink S."/>
            <person name="Boutin A."/>
            <person name="Shao Y."/>
            <person name="Miller L."/>
            <person name="Grotbeck E.J."/>
            <person name="Davis N.W."/>
            <person name="Lim A."/>
            <person name="Dimalanta E.T."/>
            <person name="Potamousis K."/>
            <person name="Apodaca J."/>
            <person name="Anantharaman T.S."/>
            <person name="Lin J."/>
            <person name="Yen G."/>
            <person name="Schwartz D.C."/>
            <person name="Welch R.A."/>
            <person name="Blattner F.R."/>
        </authorList>
    </citation>
    <scope>NUCLEOTIDE SEQUENCE [LARGE SCALE GENOMIC DNA]</scope>
    <source>
        <strain>O157:H7 / EDL933 / ATCC 700927 / EHEC</strain>
    </source>
</reference>
<reference key="2">
    <citation type="journal article" date="2001" name="DNA Res.">
        <title>Complete genome sequence of enterohemorrhagic Escherichia coli O157:H7 and genomic comparison with a laboratory strain K-12.</title>
        <authorList>
            <person name="Hayashi T."/>
            <person name="Makino K."/>
            <person name="Ohnishi M."/>
            <person name="Kurokawa K."/>
            <person name="Ishii K."/>
            <person name="Yokoyama K."/>
            <person name="Han C.-G."/>
            <person name="Ohtsubo E."/>
            <person name="Nakayama K."/>
            <person name="Murata T."/>
            <person name="Tanaka M."/>
            <person name="Tobe T."/>
            <person name="Iida T."/>
            <person name="Takami H."/>
            <person name="Honda T."/>
            <person name="Sasakawa C."/>
            <person name="Ogasawara N."/>
            <person name="Yasunaga T."/>
            <person name="Kuhara S."/>
            <person name="Shiba T."/>
            <person name="Hattori M."/>
            <person name="Shinagawa H."/>
        </authorList>
    </citation>
    <scope>NUCLEOTIDE SEQUENCE [LARGE SCALE GENOMIC DNA]</scope>
    <source>
        <strain>O157:H7 / Sakai / RIMD 0509952 / EHEC</strain>
    </source>
</reference>
<protein>
    <recommendedName>
        <fullName>Pyridoxal phosphate phosphatase YigL</fullName>
        <ecNumber>3.1.3.74</ecNumber>
    </recommendedName>
    <alternativeName>
        <fullName>PLP phosphatase</fullName>
    </alternativeName>
    <alternativeName>
        <fullName>Sugar phosphatase</fullName>
        <ecNumber>3.1.3.23</ecNumber>
    </alternativeName>
</protein>
<proteinExistence type="inferred from homology"/>